<sequence length="105" mass="12287">MITDEEIRKVIAPLLLSGAKMLDKHCPKCGSPLFEKDGRVFCPVCEYREKQKKEMVKGVEERLMEKLTQLANSLPDDIDELEKHLRVMEKIIEVLEKYKKLEGRR</sequence>
<reference key="1">
    <citation type="journal article" date="1998" name="DNA Res.">
        <title>Complete sequence and gene organization of the genome of a hyper-thermophilic archaebacterium, Pyrococcus horikoshii OT3.</title>
        <authorList>
            <person name="Kawarabayasi Y."/>
            <person name="Sawada M."/>
            <person name="Horikawa H."/>
            <person name="Haikawa Y."/>
            <person name="Hino Y."/>
            <person name="Yamamoto S."/>
            <person name="Sekine M."/>
            <person name="Baba S."/>
            <person name="Kosugi H."/>
            <person name="Hosoyama A."/>
            <person name="Nagai Y."/>
            <person name="Sakai M."/>
            <person name="Ogura K."/>
            <person name="Otsuka R."/>
            <person name="Nakazawa H."/>
            <person name="Takamiya M."/>
            <person name="Ohfuku Y."/>
            <person name="Funahashi T."/>
            <person name="Tanaka T."/>
            <person name="Kudoh Y."/>
            <person name="Yamazaki J."/>
            <person name="Kushida N."/>
            <person name="Oguchi A."/>
            <person name="Aoki K."/>
            <person name="Yoshizawa T."/>
            <person name="Nakamura Y."/>
            <person name="Robb F.T."/>
            <person name="Horikoshi K."/>
            <person name="Masuchi Y."/>
            <person name="Shizuya H."/>
            <person name="Kikuchi H."/>
        </authorList>
    </citation>
    <scope>NUCLEOTIDE SEQUENCE [LARGE SCALE GENOMIC DNA]</scope>
    <source>
        <strain>ATCC 700860 / DSM 12428 / JCM 9974 / NBRC 100139 / OT-3</strain>
    </source>
</reference>
<dbReference type="EMBL" id="BA000001">
    <property type="protein sequence ID" value="BAA29888.1"/>
    <property type="molecule type" value="Genomic_DNA"/>
</dbReference>
<dbReference type="PIR" id="F71128">
    <property type="entry name" value="F71128"/>
</dbReference>
<dbReference type="RefSeq" id="WP_010884889.1">
    <property type="nucleotide sequence ID" value="NC_000961.1"/>
</dbReference>
<dbReference type="SMR" id="O58525"/>
<dbReference type="IntAct" id="O58525">
    <property type="interactions" value="1"/>
</dbReference>
<dbReference type="MINT" id="O58525"/>
<dbReference type="STRING" id="70601.gene:9377745"/>
<dbReference type="EnsemblBacteria" id="BAA29888">
    <property type="protein sequence ID" value="BAA29888"/>
    <property type="gene ID" value="BAA29888"/>
</dbReference>
<dbReference type="GeneID" id="1443124"/>
<dbReference type="KEGG" id="pho:PH0795"/>
<dbReference type="eggNOG" id="arCOG00578">
    <property type="taxonomic scope" value="Archaea"/>
</dbReference>
<dbReference type="OrthoDB" id="26305at2157"/>
<dbReference type="Proteomes" id="UP000000752">
    <property type="component" value="Chromosome"/>
</dbReference>
<dbReference type="GO" id="GO:0006351">
    <property type="term" value="P:DNA-templated transcription"/>
    <property type="evidence" value="ECO:0007669"/>
    <property type="project" value="InterPro"/>
</dbReference>
<dbReference type="HAMAP" id="MF_00343">
    <property type="entry name" value="UPF0148"/>
    <property type="match status" value="1"/>
</dbReference>
<dbReference type="InterPro" id="IPR009563">
    <property type="entry name" value="SSSCA1"/>
</dbReference>
<dbReference type="InterPro" id="IPR022954">
    <property type="entry name" value="UPF0148"/>
</dbReference>
<dbReference type="InterPro" id="IPR051888">
    <property type="entry name" value="UPF0148_domain"/>
</dbReference>
<dbReference type="InterPro" id="IPR001529">
    <property type="entry name" value="Zn_ribbon_RPB9"/>
</dbReference>
<dbReference type="NCBIfam" id="NF001645">
    <property type="entry name" value="PRK00420.1-2"/>
    <property type="match status" value="1"/>
</dbReference>
<dbReference type="PANTHER" id="PTHR16537:SF1">
    <property type="entry name" value="PROTEIN ZNRD2"/>
    <property type="match status" value="1"/>
</dbReference>
<dbReference type="PANTHER" id="PTHR16537">
    <property type="entry name" value="SJOEGREN SYNDROME/SCLERODERMA AUTOANTIGEN 1"/>
    <property type="match status" value="1"/>
</dbReference>
<dbReference type="Pfam" id="PF06677">
    <property type="entry name" value="Auto_anti-p27"/>
    <property type="match status" value="1"/>
</dbReference>
<dbReference type="SMART" id="SM00661">
    <property type="entry name" value="RPOL9"/>
    <property type="match status" value="1"/>
</dbReference>
<proteinExistence type="inferred from homology"/>
<organism>
    <name type="scientific">Pyrococcus horikoshii (strain ATCC 700860 / DSM 12428 / JCM 9974 / NBRC 100139 / OT-3)</name>
    <dbReference type="NCBI Taxonomy" id="70601"/>
    <lineage>
        <taxon>Archaea</taxon>
        <taxon>Methanobacteriati</taxon>
        <taxon>Methanobacteriota</taxon>
        <taxon>Thermococci</taxon>
        <taxon>Thermococcales</taxon>
        <taxon>Thermococcaceae</taxon>
        <taxon>Pyrococcus</taxon>
    </lineage>
</organism>
<feature type="chain" id="PRO_0000159859" description="UPF0148 protein PH0795">
    <location>
        <begin position="1"/>
        <end position="105"/>
    </location>
</feature>
<gene>
    <name type="ordered locus">PH0795</name>
</gene>
<protein>
    <recommendedName>
        <fullName>UPF0148 protein PH0795</fullName>
    </recommendedName>
</protein>
<accession>O58525</accession>
<evidence type="ECO:0000305" key="1"/>
<name>Y795_PYRHO</name>
<comment type="similarity">
    <text evidence="1">Belongs to the UPF0148 family.</text>
</comment>